<keyword id="KW-1003">Cell membrane</keyword>
<keyword id="KW-0325">Glycoprotein</keyword>
<keyword id="KW-0391">Immunity</keyword>
<keyword id="KW-0433">Leucine-rich repeat</keyword>
<keyword id="KW-0472">Membrane</keyword>
<keyword id="KW-0611">Plant defense</keyword>
<keyword id="KW-1185">Reference proteome</keyword>
<keyword id="KW-0677">Repeat</keyword>
<keyword id="KW-0732">Signal</keyword>
<keyword id="KW-0812">Transmembrane</keyword>
<keyword id="KW-1133">Transmembrane helix</keyword>
<reference evidence="9" key="1">
    <citation type="journal article" date="2012" name="Nature">
        <title>The tomato genome sequence provides insights into fleshy fruit evolution.</title>
        <authorList>
            <consortium name="Tomato Genome Consortium"/>
        </authorList>
    </citation>
    <scope>NUCLEOTIDE SEQUENCE [LARGE SCALE GENOMIC DNA]</scope>
    <source>
        <strain evidence="9">cv. Heinz 1706</strain>
    </source>
</reference>
<reference key="2">
    <citation type="journal article" date="2016" name="Science">
        <title>Detection of the plant parasite Cuscuta reflexa by a tomato cell surface receptor.</title>
        <authorList>
            <person name="Hegenauer V."/>
            <person name="Fuerst U."/>
            <person name="Kaiser B."/>
            <person name="Smoker M."/>
            <person name="Zipfel C."/>
            <person name="Felix G."/>
            <person name="Stahl M."/>
            <person name="Albert M."/>
        </authorList>
    </citation>
    <scope>FUNCTION</scope>
    <scope>INTERACTION WITH SOBIR1 AND SOBIR1-LIKE KINASES</scope>
    <scope>SUBCELLULAR LOCATION</scope>
</reference>
<reference key="3">
    <citation type="journal article" date="2020" name="Nat. Commun.">
        <title>The tomato receptor CuRe1 senses a cell wall protein to identify Cuscuta as a pathogen.</title>
        <authorList>
            <person name="Hegenauer V."/>
            <person name="Slaby P."/>
            <person name="Koerner M."/>
            <person name="Bruckmueller J.A."/>
            <person name="Burggraf R."/>
            <person name="Albert I."/>
            <person name="Kaiser B."/>
            <person name="Loeffelhardt B."/>
            <person name="Droste-Borel I."/>
            <person name="Sklenar J."/>
            <person name="Menke F.L.H."/>
            <person name="Macek B."/>
            <person name="Ranjan A."/>
            <person name="Sinha N."/>
            <person name="Nuernberger T."/>
            <person name="Felix G."/>
            <person name="Krause K."/>
            <person name="Stahl M."/>
            <person name="Albert M."/>
        </authorList>
    </citation>
    <scope>FUNCTION</scope>
    <scope>INTERACTION WITH GRP OF CUSCUTA REFLEXA</scope>
</reference>
<feature type="signal peptide" evidence="1">
    <location>
        <begin position="1"/>
        <end position="20"/>
    </location>
</feature>
<feature type="chain" id="PRO_5018738079" description="Cuscuta receptor 1" evidence="1">
    <location>
        <begin position="21"/>
        <end position="1121"/>
    </location>
</feature>
<feature type="topological domain" description="Extracellular" evidence="7">
    <location>
        <begin position="21"/>
        <end position="1058"/>
    </location>
</feature>
<feature type="transmembrane region" description="Helical" evidence="1">
    <location>
        <begin position="1059"/>
        <end position="1079"/>
    </location>
</feature>
<feature type="topological domain" description="Cytoplasmic" evidence="7">
    <location>
        <begin position="1080"/>
        <end position="1121"/>
    </location>
</feature>
<feature type="repeat" description="LRR 1" evidence="1">
    <location>
        <begin position="98"/>
        <end position="122"/>
    </location>
</feature>
<feature type="repeat" description="LRR 2" evidence="1">
    <location>
        <begin position="126"/>
        <end position="152"/>
    </location>
</feature>
<feature type="repeat" description="LRR 3" evidence="1">
    <location>
        <begin position="185"/>
        <end position="209"/>
    </location>
</feature>
<feature type="repeat" description="LRR 4" evidence="1">
    <location>
        <begin position="210"/>
        <end position="233"/>
    </location>
</feature>
<feature type="repeat" description="LRR 5" evidence="1">
    <location>
        <begin position="234"/>
        <end position="259"/>
    </location>
</feature>
<feature type="repeat" description="LRR 6" evidence="1">
    <location>
        <begin position="260"/>
        <end position="282"/>
    </location>
</feature>
<feature type="repeat" description="LRR 7" evidence="1">
    <location>
        <begin position="284"/>
        <end position="308"/>
    </location>
</feature>
<feature type="repeat" description="LRR 8" evidence="1">
    <location>
        <begin position="309"/>
        <end position="331"/>
    </location>
</feature>
<feature type="repeat" description="LRR 9" evidence="1">
    <location>
        <begin position="334"/>
        <end position="360"/>
    </location>
</feature>
<feature type="repeat" description="LRR 10" evidence="1">
    <location>
        <begin position="383"/>
        <end position="406"/>
    </location>
</feature>
<feature type="repeat" description="LRR 11" evidence="1">
    <location>
        <begin position="407"/>
        <end position="432"/>
    </location>
</feature>
<feature type="repeat" description="LRR 12" evidence="1">
    <location>
        <begin position="433"/>
        <end position="457"/>
    </location>
</feature>
<feature type="repeat" description="LRR 13" evidence="1">
    <location>
        <begin position="459"/>
        <end position="479"/>
    </location>
</feature>
<feature type="repeat" description="LRR 14" evidence="1">
    <location>
        <begin position="507"/>
        <end position="531"/>
    </location>
</feature>
<feature type="repeat" description="LRR 15" evidence="1">
    <location>
        <begin position="556"/>
        <end position="580"/>
    </location>
</feature>
<feature type="repeat" description="LRR 16" evidence="1">
    <location>
        <begin position="581"/>
        <end position="605"/>
    </location>
</feature>
<feature type="repeat" description="LRR 17" evidence="1">
    <location>
        <begin position="607"/>
        <end position="628"/>
    </location>
</feature>
<feature type="repeat" description="LRR 18" evidence="1">
    <location>
        <begin position="630"/>
        <end position="654"/>
    </location>
</feature>
<feature type="repeat" description="LRR 19" evidence="1">
    <location>
        <begin position="655"/>
        <end position="678"/>
    </location>
</feature>
<feature type="repeat" description="LRR 20" evidence="1">
    <location>
        <begin position="680"/>
        <end position="701"/>
    </location>
</feature>
<feature type="repeat" description="LRR 21" evidence="1">
    <location>
        <begin position="702"/>
        <end position="725"/>
    </location>
</feature>
<feature type="repeat" description="LRR 22" evidence="1">
    <location>
        <begin position="726"/>
        <end position="749"/>
    </location>
</feature>
<feature type="repeat" description="LRR 23" evidence="1">
    <location>
        <begin position="751"/>
        <end position="772"/>
    </location>
</feature>
<feature type="repeat" description="LRR 24" evidence="1">
    <location>
        <begin position="773"/>
        <end position="796"/>
    </location>
</feature>
<feature type="repeat" description="LRR 25" evidence="1">
    <location>
        <begin position="797"/>
        <end position="820"/>
    </location>
</feature>
<feature type="repeat" description="LRR 26" evidence="1">
    <location>
        <begin position="822"/>
        <end position="846"/>
    </location>
</feature>
<feature type="repeat" description="LRR 27" evidence="1">
    <location>
        <begin position="914"/>
        <end position="938"/>
    </location>
</feature>
<feature type="repeat" description="LRR 28" evidence="1">
    <location>
        <begin position="939"/>
        <end position="961"/>
    </location>
</feature>
<feature type="repeat" description="LRR 29" evidence="1">
    <location>
        <begin position="962"/>
        <end position="986"/>
    </location>
</feature>
<feature type="repeat" description="LRR 30" evidence="1">
    <location>
        <begin position="988"/>
        <end position="1012"/>
    </location>
</feature>
<feature type="glycosylation site" description="N-linked (GlcNAc...) asparagine" evidence="2">
    <location>
        <position position="91"/>
    </location>
</feature>
<feature type="glycosylation site" description="N-linked (GlcNAc...) asparagine" evidence="2">
    <location>
        <position position="224"/>
    </location>
</feature>
<feature type="glycosylation site" description="N-linked (GlcNAc...) asparagine" evidence="2">
    <location>
        <position position="298"/>
    </location>
</feature>
<feature type="glycosylation site" description="N-linked (GlcNAc...) asparagine" evidence="2">
    <location>
        <position position="321"/>
    </location>
</feature>
<feature type="glycosylation site" description="N-linked (GlcNAc...) asparagine" evidence="2">
    <location>
        <position position="333"/>
    </location>
</feature>
<feature type="glycosylation site" description="N-linked (GlcNAc...) asparagine" evidence="2">
    <location>
        <position position="372"/>
    </location>
</feature>
<feature type="glycosylation site" description="N-linked (GlcNAc...) asparagine" evidence="2">
    <location>
        <position position="406"/>
    </location>
</feature>
<feature type="glycosylation site" description="N-linked (GlcNAc...) asparagine" evidence="2">
    <location>
        <position position="531"/>
    </location>
</feature>
<feature type="glycosylation site" description="N-linked (GlcNAc...) asparagine" evidence="2">
    <location>
        <position position="576"/>
    </location>
</feature>
<feature type="glycosylation site" description="N-linked (GlcNAc...) asparagine" evidence="2">
    <location>
        <position position="588"/>
    </location>
</feature>
<feature type="glycosylation site" description="N-linked (GlcNAc...) asparagine" evidence="2">
    <location>
        <position position="689"/>
    </location>
</feature>
<feature type="glycosylation site" description="N-linked (GlcNAc...) asparagine" evidence="2">
    <location>
        <position position="771"/>
    </location>
</feature>
<feature type="glycosylation site" description="N-linked (GlcNAc...) asparagine" evidence="2">
    <location>
        <position position="822"/>
    </location>
</feature>
<feature type="glycosylation site" description="N-linked (GlcNAc...) asparagine" evidence="2">
    <location>
        <position position="937"/>
    </location>
</feature>
<feature type="glycosylation site" description="N-linked (GlcNAc...) asparagine" evidence="2">
    <location>
        <position position="945"/>
    </location>
</feature>
<feature type="glycosylation site" description="N-linked (GlcNAc...) asparagine" evidence="2">
    <location>
        <position position="976"/>
    </location>
</feature>
<feature type="glycosylation site" description="N-linked (GlcNAc...) asparagine" evidence="2">
    <location>
        <position position="998"/>
    </location>
</feature>
<feature type="glycosylation site" description="N-linked (GlcNAc...) asparagine" evidence="2">
    <location>
        <position position="1014"/>
    </location>
</feature>
<feature type="glycosylation site" description="N-linked (GlcNAc...) asparagine" evidence="2">
    <location>
        <position position="1041"/>
    </location>
</feature>
<gene>
    <name evidence="7" type="ordered locus">Solyc08g016270</name>
</gene>
<comment type="function">
    <text evidence="3 4">Involved in plant defense. Contributes to resistance against parasitic plant C.reflexa (PubMed:27471302, PubMed:33082345). Acts as a receptor for the 11 kDa glycine-rich protein (GRP) of C.reflexa inducing immune responses such as emission of stress-related phytohormone ethylene, reactive oxygen species (ROS) release, and hypersensitive cell death (PubMed:27471302, PubMed:33082345). Recognizes a specific pathogen-associated molecular pattern (PAMP), a cysteine-rich peptide 21 (crip21), from GRP located on the cell wall of C.reflexa (PubMed:33082345).</text>
</comment>
<comment type="subunit">
    <text evidence="3 4">Interacts with an 11 kDa glycine-rich protein (GRP) of C.reflexa (PubMed:33082345). Interacts with SOBIR1 and SOBIR1-like kinases; presence or absence of GRP has no effect on interaction (PubMed:27471302).</text>
</comment>
<comment type="subcellular location">
    <subcellularLocation>
        <location evidence="3">Cell membrane</location>
        <topology evidence="1 8">Single-pass membrane protein</topology>
    </subcellularLocation>
    <subcellularLocation>
        <location evidence="8">Cell surface</location>
    </subcellularLocation>
</comment>
<comment type="similarity">
    <text evidence="7">Belongs to the RLP family.</text>
</comment>
<organism evidence="9">
    <name type="scientific">Solanum lycopersicum</name>
    <name type="common">Tomato</name>
    <name type="synonym">Lycopersicon esculentum</name>
    <dbReference type="NCBI Taxonomy" id="4081"/>
    <lineage>
        <taxon>Eukaryota</taxon>
        <taxon>Viridiplantae</taxon>
        <taxon>Streptophyta</taxon>
        <taxon>Embryophyta</taxon>
        <taxon>Tracheophyta</taxon>
        <taxon>Spermatophyta</taxon>
        <taxon>Magnoliopsida</taxon>
        <taxon>eudicotyledons</taxon>
        <taxon>Gunneridae</taxon>
        <taxon>Pentapetalae</taxon>
        <taxon>asterids</taxon>
        <taxon>lamiids</taxon>
        <taxon>Solanales</taxon>
        <taxon>Solanaceae</taxon>
        <taxon>Solanoideae</taxon>
        <taxon>Solaneae</taxon>
        <taxon>Solanum</taxon>
        <taxon>Solanum subgen. Lycopersicon</taxon>
    </lineage>
</organism>
<accession>A0A3Q7HJG4</accession>
<evidence type="ECO:0000255" key="1"/>
<evidence type="ECO:0000255" key="2">
    <source>
        <dbReference type="PROSITE-ProRule" id="PRU00498"/>
    </source>
</evidence>
<evidence type="ECO:0000269" key="3">
    <source>
    </source>
</evidence>
<evidence type="ECO:0000269" key="4">
    <source>
    </source>
</evidence>
<evidence type="ECO:0000303" key="5">
    <source>
    </source>
</evidence>
<evidence type="ECO:0000303" key="6">
    <source>
    </source>
</evidence>
<evidence type="ECO:0000305" key="7"/>
<evidence type="ECO:0000305" key="8">
    <source>
    </source>
</evidence>
<evidence type="ECO:0000312" key="9">
    <source>
        <dbReference type="EnsemblPlants" id="Solyc08g016270.2.1"/>
    </source>
</evidence>
<dbReference type="EMBL" id="CM001071">
    <property type="status" value="NOT_ANNOTATED_CDS"/>
    <property type="molecule type" value="Genomic_DNA"/>
</dbReference>
<dbReference type="SMR" id="A0A3Q7HJG4"/>
<dbReference type="FunCoup" id="A0A3Q7HJG4">
    <property type="interactions" value="1578"/>
</dbReference>
<dbReference type="PaxDb" id="4081-Solyc08g016270.1.1"/>
<dbReference type="EnsemblPlants" id="Solyc08g016270.2.1">
    <property type="protein sequence ID" value="Solyc08g016270.2.1"/>
    <property type="gene ID" value="Solyc08g016270.2"/>
</dbReference>
<dbReference type="Gramene" id="Solyc08g016270.2.1">
    <property type="protein sequence ID" value="Solyc08g016270.2.1"/>
    <property type="gene ID" value="Solyc08g016270.2"/>
</dbReference>
<dbReference type="InParanoid" id="A0A3Q7HJG4"/>
<dbReference type="OMA" id="WISSARH"/>
<dbReference type="OrthoDB" id="1298450at2759"/>
<dbReference type="Proteomes" id="UP000004994">
    <property type="component" value="Chromosome 8"/>
</dbReference>
<dbReference type="GO" id="GO:0009986">
    <property type="term" value="C:cell surface"/>
    <property type="evidence" value="ECO:0007669"/>
    <property type="project" value="UniProtKB-SubCell"/>
</dbReference>
<dbReference type="GO" id="GO:0005886">
    <property type="term" value="C:plasma membrane"/>
    <property type="evidence" value="ECO:0000314"/>
    <property type="project" value="UniProtKB"/>
</dbReference>
<dbReference type="GO" id="GO:0038187">
    <property type="term" value="F:pattern recognition receptor activity"/>
    <property type="evidence" value="ECO:0000314"/>
    <property type="project" value="UniProtKB"/>
</dbReference>
<dbReference type="GO" id="GO:0002218">
    <property type="term" value="P:activation of innate immune response"/>
    <property type="evidence" value="ECO:0000314"/>
    <property type="project" value="UniProtKB"/>
</dbReference>
<dbReference type="GO" id="GO:0002752">
    <property type="term" value="P:cell surface pattern recognition receptor signaling pathway"/>
    <property type="evidence" value="ECO:0000314"/>
    <property type="project" value="UniProtKB"/>
</dbReference>
<dbReference type="GO" id="GO:0002242">
    <property type="term" value="P:defense response to parasitic plant"/>
    <property type="evidence" value="ECO:0000314"/>
    <property type="project" value="UniProtKB"/>
</dbReference>
<dbReference type="GO" id="GO:0002768">
    <property type="term" value="P:immune response-regulating cell surface receptor signaling pathway"/>
    <property type="evidence" value="ECO:0000314"/>
    <property type="project" value="UniProtKB"/>
</dbReference>
<dbReference type="GO" id="GO:0140426">
    <property type="term" value="P:pathogen-associated molecular pattern receptor signaling pathway"/>
    <property type="evidence" value="ECO:0000314"/>
    <property type="project" value="UniProtKB"/>
</dbReference>
<dbReference type="GO" id="GO:0009626">
    <property type="term" value="P:plant-type hypersensitive response"/>
    <property type="evidence" value="ECO:0000314"/>
    <property type="project" value="UniProtKB"/>
</dbReference>
<dbReference type="FunFam" id="3.80.10.10:FF:000111">
    <property type="entry name" value="LRR receptor-like serine/threonine-protein kinase ERECTA"/>
    <property type="match status" value="1"/>
</dbReference>
<dbReference type="FunFam" id="3.80.10.10:FF:000095">
    <property type="entry name" value="LRR receptor-like serine/threonine-protein kinase GSO1"/>
    <property type="match status" value="1"/>
</dbReference>
<dbReference type="Gene3D" id="3.80.10.10">
    <property type="entry name" value="Ribonuclease Inhibitor"/>
    <property type="match status" value="2"/>
</dbReference>
<dbReference type="InterPro" id="IPR001611">
    <property type="entry name" value="Leu-rich_rpt"/>
</dbReference>
<dbReference type="InterPro" id="IPR003591">
    <property type="entry name" value="Leu-rich_rpt_typical-subtyp"/>
</dbReference>
<dbReference type="InterPro" id="IPR032675">
    <property type="entry name" value="LRR_dom_sf"/>
</dbReference>
<dbReference type="InterPro" id="IPR051502">
    <property type="entry name" value="RLP_Defense_Trigger"/>
</dbReference>
<dbReference type="PANTHER" id="PTHR48062:SF5">
    <property type="entry name" value="CUSCUTA RECEPTOR 1"/>
    <property type="match status" value="1"/>
</dbReference>
<dbReference type="PANTHER" id="PTHR48062">
    <property type="entry name" value="RECEPTOR-LIKE PROTEIN 14"/>
    <property type="match status" value="1"/>
</dbReference>
<dbReference type="Pfam" id="PF00560">
    <property type="entry name" value="LRR_1"/>
    <property type="match status" value="7"/>
</dbReference>
<dbReference type="Pfam" id="PF13855">
    <property type="entry name" value="LRR_8"/>
    <property type="match status" value="1"/>
</dbReference>
<dbReference type="SMART" id="SM00369">
    <property type="entry name" value="LRR_TYP"/>
    <property type="match status" value="7"/>
</dbReference>
<dbReference type="SUPFAM" id="SSF52058">
    <property type="entry name" value="L domain-like"/>
    <property type="match status" value="2"/>
</dbReference>
<dbReference type="SUPFAM" id="SSF52047">
    <property type="entry name" value="RNI-like"/>
    <property type="match status" value="1"/>
</dbReference>
<dbReference type="PROSITE" id="PS51450">
    <property type="entry name" value="LRR"/>
    <property type="match status" value="18"/>
</dbReference>
<name>CURE1_SOLLC</name>
<proteinExistence type="evidence at protein level"/>
<protein>
    <recommendedName>
        <fullName evidence="5 6">Cuscuta receptor 1</fullName>
        <shortName evidence="5 6">CuRe1</shortName>
    </recommendedName>
    <alternativeName>
        <fullName evidence="5">Leucine-rich repeat receptor-like protein Solyc08g016270</fullName>
        <shortName evidence="5">LRR-RLP Solyc08g016270</shortName>
    </alternativeName>
</protein>
<sequence>MGNIKFLLLVFFLIVVVVNGCWEEERNALLELQTNIMSSNGELLVDWAGYNAAHFVDCCFWDRVKCSLETGRVIKLDLEADFGTGDGWLFNASLFLPFKSLQVLLLSSQNIIGWTKNEGFSKLRQLPNLKEVDLQYNPIDPKVLLSSLCWISSLEVLKLGVDVDTSFSIPMTYNTNMMSKKCGGLSNLRELWFEGYEINDINILSALGELRNLEKLILDDNNFNSTIFSSLKIFPSLKHLNLAANEINGNVEMNDIIDLSNLEYLDLSDNNIHSFATTKGNKKMTSLRSLLLGSSYSNSSRVIRSLKSFSSLKSLSYKNSNLTSPSIIYALRNLSTVEYLYFKGSSLNDNFLPNIGQMTSLKVLNMPSGGNNGTLPNQGWCELKYIEELDFLNNNFVGTLPLCLGNLTSLRWLSLAGNNLHGNIASHSIWRRLTSLEYLDIADNQFDVPLSFSQFSDHKKLIYLNVGYNTIITDTEYQNWIPNFQLEFFAIQRCIALQKLPSFLHYQYDLRILAIEGNQLQGKFPTWLLENNTRLAAIYGRDNAFSGPLKLPSSVHLHLEAVDVSNNKLNGHIPQNMSLAFPKLLSLNMSHNHLEGPIPSKISGIYLTILDLSVNFLSGEVPGDLAVVDSPQLFYLRLSNNKLKGKIFSEEFRPHVLSFLYLNDNNFEGALPSNVFLSSLITLDASRNNFSGEIPGCTRDNRRLLQLDLSKNHLQGLIPVEICNLKIINVLAISENKISGSIPSCVSSLPLKHIHLQKNQLGGELGHVIFNFSSLITLDLRYNNFAGNIPYTIGSLSNLNYLLLSNNKLEGDIPTQICMLNNLSIVDLSFNKLYGPLPPCLGYLTQTKKDAEISWTYFAENYRGSWLNFVIWMRSKRHYHDSHGLLSDLFLMDVETQVQFSTKKNSYTYKGNILKYMSGIDLSSNRLTGEIPVELGNMSNIHALNLSHNHLNGRIPNTFSNLQEIESLDLSCNRLNGSIPVGLLELNSLAVFSVAYNNLSGAVPDFKAQFGTFNKSSYEGNPFLCGYPLDNKCGMSPKLSNTSNINGDEESSELEDIQCFYIGFVVSFGAILLGLAAALCLNRHWRRAWFRMIEALMFYCYYFVLDNIVTPIKSRWYKNVG</sequence>